<dbReference type="GO" id="GO:0005576">
    <property type="term" value="C:extracellular region"/>
    <property type="evidence" value="ECO:0007669"/>
    <property type="project" value="UniProtKB-SubCell"/>
</dbReference>
<evidence type="ECO:0000269" key="1">
    <source>
    </source>
</evidence>
<evidence type="ECO:0000303" key="2">
    <source>
    </source>
</evidence>
<evidence type="ECO:0000305" key="3"/>
<feature type="peptide" id="PRO_0000404641" description="Skin secreted peptide P1-3" evidence="1">
    <location>
        <begin position="1"/>
        <end position="10"/>
    </location>
</feature>
<feature type="unsure residue" description="K or Q" evidence="1">
    <location>
        <position position="1"/>
    </location>
</feature>
<comment type="subcellular location">
    <subcellularLocation>
        <location evidence="1">Secreted</location>
    </subcellularLocation>
</comment>
<comment type="tissue specificity">
    <text evidence="1">Expressed by the skin glands.</text>
</comment>
<comment type="mass spectrometry" mass="1231.6" method="MALDI" evidence="1"/>
<name>SSP13_PHAJA</name>
<protein>
    <recommendedName>
        <fullName evidence="2">Skin secreted peptide P1-3</fullName>
        <shortName evidence="2">PjP1-3</shortName>
    </recommendedName>
</protein>
<keyword id="KW-0903">Direct protein sequencing</keyword>
<keyword id="KW-0964">Secreted</keyword>
<reference evidence="3" key="1">
    <citation type="journal article" date="2011" name="Toxicon">
        <title>Peptidomic dissection of the skin secretion of Phasmahyla jandaia (Bokermann and Sazima, 1978) (Anura, Hylidae, Phyllomedusinae).</title>
        <authorList>
            <person name="Rates B."/>
            <person name="Silva L.P."/>
            <person name="Ireno I.C."/>
            <person name="Leite F.S."/>
            <person name="Borges M.H."/>
            <person name="Bloch C. Jr."/>
            <person name="De Lima M.E."/>
            <person name="Pimenta A.M."/>
        </authorList>
    </citation>
    <scope>PROTEIN SEQUENCE</scope>
    <scope>SUBCELLULAR LOCATION</scope>
    <scope>TISSUE SPECIFICITY</scope>
    <scope>MASS SPECTROMETRY</scope>
    <source>
        <tissue evidence="1">Skin secretion</tissue>
    </source>
</reference>
<proteinExistence type="evidence at protein level"/>
<accession>P86604</accession>
<sequence length="10" mass="1232">KPEEDWGRES</sequence>
<organism>
    <name type="scientific">Phasmahyla jandaia</name>
    <name type="common">Jandaia leaf frog</name>
    <name type="synonym">Phyllomedusa jandaia</name>
    <dbReference type="NCBI Taxonomy" id="762504"/>
    <lineage>
        <taxon>Eukaryota</taxon>
        <taxon>Metazoa</taxon>
        <taxon>Chordata</taxon>
        <taxon>Craniata</taxon>
        <taxon>Vertebrata</taxon>
        <taxon>Euteleostomi</taxon>
        <taxon>Amphibia</taxon>
        <taxon>Batrachia</taxon>
        <taxon>Anura</taxon>
        <taxon>Neobatrachia</taxon>
        <taxon>Hyloidea</taxon>
        <taxon>Hylidae</taxon>
        <taxon>Phyllomedusinae</taxon>
        <taxon>Phasmahyla</taxon>
    </lineage>
</organism>